<reference key="1">
    <citation type="journal article" date="2006" name="Proc. Natl. Acad. Sci. U.S.A.">
        <title>Comparative genomics of the lactic acid bacteria.</title>
        <authorList>
            <person name="Makarova K.S."/>
            <person name="Slesarev A."/>
            <person name="Wolf Y.I."/>
            <person name="Sorokin A."/>
            <person name="Mirkin B."/>
            <person name="Koonin E.V."/>
            <person name="Pavlov A."/>
            <person name="Pavlova N."/>
            <person name="Karamychev V."/>
            <person name="Polouchine N."/>
            <person name="Shakhova V."/>
            <person name="Grigoriev I."/>
            <person name="Lou Y."/>
            <person name="Rohksar D."/>
            <person name="Lucas S."/>
            <person name="Huang K."/>
            <person name="Goodstein D.M."/>
            <person name="Hawkins T."/>
            <person name="Plengvidhya V."/>
            <person name="Welker D."/>
            <person name="Hughes J."/>
            <person name="Goh Y."/>
            <person name="Benson A."/>
            <person name="Baldwin K."/>
            <person name="Lee J.-H."/>
            <person name="Diaz-Muniz I."/>
            <person name="Dosti B."/>
            <person name="Smeianov V."/>
            <person name="Wechter W."/>
            <person name="Barabote R."/>
            <person name="Lorca G."/>
            <person name="Altermann E."/>
            <person name="Barrangou R."/>
            <person name="Ganesan B."/>
            <person name="Xie Y."/>
            <person name="Rawsthorne H."/>
            <person name="Tamir D."/>
            <person name="Parker C."/>
            <person name="Breidt F."/>
            <person name="Broadbent J.R."/>
            <person name="Hutkins R."/>
            <person name="O'Sullivan D."/>
            <person name="Steele J."/>
            <person name="Unlu G."/>
            <person name="Saier M.H. Jr."/>
            <person name="Klaenhammer T."/>
            <person name="Richardson P."/>
            <person name="Kozyavkin S."/>
            <person name="Weimer B.C."/>
            <person name="Mills D.A."/>
        </authorList>
    </citation>
    <scope>NUCLEOTIDE SEQUENCE [LARGE SCALE GENOMIC DNA]</scope>
    <source>
        <strain>ATCC 33323 / DSM 20243 / BCRC 14619 / CIP 102991 / JCM 1131 / KCTC 3163 / NCIMB 11718 / NCTC 13722 / AM63</strain>
    </source>
</reference>
<name>SYC_LACGA</name>
<dbReference type="EC" id="6.1.1.16" evidence="1"/>
<dbReference type="EMBL" id="CP000413">
    <property type="protein sequence ID" value="ABJ59744.1"/>
    <property type="molecule type" value="Genomic_DNA"/>
</dbReference>
<dbReference type="SMR" id="Q045X8"/>
<dbReference type="KEGG" id="lga:LGAS_0338"/>
<dbReference type="HOGENOM" id="CLU_013528_0_1_9"/>
<dbReference type="Proteomes" id="UP000000664">
    <property type="component" value="Chromosome"/>
</dbReference>
<dbReference type="GO" id="GO:0005829">
    <property type="term" value="C:cytosol"/>
    <property type="evidence" value="ECO:0007669"/>
    <property type="project" value="TreeGrafter"/>
</dbReference>
<dbReference type="GO" id="GO:0005524">
    <property type="term" value="F:ATP binding"/>
    <property type="evidence" value="ECO:0007669"/>
    <property type="project" value="UniProtKB-UniRule"/>
</dbReference>
<dbReference type="GO" id="GO:0004817">
    <property type="term" value="F:cysteine-tRNA ligase activity"/>
    <property type="evidence" value="ECO:0007669"/>
    <property type="project" value="UniProtKB-UniRule"/>
</dbReference>
<dbReference type="GO" id="GO:0008270">
    <property type="term" value="F:zinc ion binding"/>
    <property type="evidence" value="ECO:0007669"/>
    <property type="project" value="UniProtKB-UniRule"/>
</dbReference>
<dbReference type="GO" id="GO:0006423">
    <property type="term" value="P:cysteinyl-tRNA aminoacylation"/>
    <property type="evidence" value="ECO:0007669"/>
    <property type="project" value="UniProtKB-UniRule"/>
</dbReference>
<dbReference type="CDD" id="cd00672">
    <property type="entry name" value="CysRS_core"/>
    <property type="match status" value="1"/>
</dbReference>
<dbReference type="FunFam" id="3.40.50.620:FF:000009">
    <property type="entry name" value="Cysteine--tRNA ligase"/>
    <property type="match status" value="1"/>
</dbReference>
<dbReference type="Gene3D" id="1.20.120.1910">
    <property type="entry name" value="Cysteine-tRNA ligase, C-terminal anti-codon recognition domain"/>
    <property type="match status" value="1"/>
</dbReference>
<dbReference type="Gene3D" id="3.40.50.620">
    <property type="entry name" value="HUPs"/>
    <property type="match status" value="1"/>
</dbReference>
<dbReference type="HAMAP" id="MF_00041">
    <property type="entry name" value="Cys_tRNA_synth"/>
    <property type="match status" value="1"/>
</dbReference>
<dbReference type="InterPro" id="IPR015803">
    <property type="entry name" value="Cys-tRNA-ligase"/>
</dbReference>
<dbReference type="InterPro" id="IPR015273">
    <property type="entry name" value="Cys-tRNA-synt_Ia_DALR"/>
</dbReference>
<dbReference type="InterPro" id="IPR024909">
    <property type="entry name" value="Cys-tRNA/MSH_ligase"/>
</dbReference>
<dbReference type="InterPro" id="IPR056411">
    <property type="entry name" value="CysS_C"/>
</dbReference>
<dbReference type="InterPro" id="IPR014729">
    <property type="entry name" value="Rossmann-like_a/b/a_fold"/>
</dbReference>
<dbReference type="InterPro" id="IPR032678">
    <property type="entry name" value="tRNA-synt_1_cat_dom"/>
</dbReference>
<dbReference type="InterPro" id="IPR009080">
    <property type="entry name" value="tRNAsynth_Ia_anticodon-bd"/>
</dbReference>
<dbReference type="NCBIfam" id="TIGR00435">
    <property type="entry name" value="cysS"/>
    <property type="match status" value="1"/>
</dbReference>
<dbReference type="PANTHER" id="PTHR10890:SF3">
    <property type="entry name" value="CYSTEINE--TRNA LIGASE, CYTOPLASMIC"/>
    <property type="match status" value="1"/>
</dbReference>
<dbReference type="PANTHER" id="PTHR10890">
    <property type="entry name" value="CYSTEINYL-TRNA SYNTHETASE"/>
    <property type="match status" value="1"/>
</dbReference>
<dbReference type="Pfam" id="PF23493">
    <property type="entry name" value="CysS_C"/>
    <property type="match status" value="1"/>
</dbReference>
<dbReference type="Pfam" id="PF09190">
    <property type="entry name" value="DALR_2"/>
    <property type="match status" value="1"/>
</dbReference>
<dbReference type="Pfam" id="PF01406">
    <property type="entry name" value="tRNA-synt_1e"/>
    <property type="match status" value="1"/>
</dbReference>
<dbReference type="PRINTS" id="PR00983">
    <property type="entry name" value="TRNASYNTHCYS"/>
</dbReference>
<dbReference type="SMART" id="SM00840">
    <property type="entry name" value="DALR_2"/>
    <property type="match status" value="1"/>
</dbReference>
<dbReference type="SUPFAM" id="SSF47323">
    <property type="entry name" value="Anticodon-binding domain of a subclass of class I aminoacyl-tRNA synthetases"/>
    <property type="match status" value="1"/>
</dbReference>
<dbReference type="SUPFAM" id="SSF52374">
    <property type="entry name" value="Nucleotidylyl transferase"/>
    <property type="match status" value="1"/>
</dbReference>
<feature type="chain" id="PRO_1000071072" description="Cysteine--tRNA ligase">
    <location>
        <begin position="1"/>
        <end position="472"/>
    </location>
</feature>
<feature type="short sequence motif" description="'HIGH' region">
    <location>
        <begin position="31"/>
        <end position="41"/>
    </location>
</feature>
<feature type="short sequence motif" description="'KMSKS' region">
    <location>
        <begin position="273"/>
        <end position="277"/>
    </location>
</feature>
<feature type="binding site" evidence="1">
    <location>
        <position position="29"/>
    </location>
    <ligand>
        <name>Zn(2+)</name>
        <dbReference type="ChEBI" id="CHEBI:29105"/>
    </ligand>
</feature>
<feature type="binding site" evidence="1">
    <location>
        <position position="214"/>
    </location>
    <ligand>
        <name>Zn(2+)</name>
        <dbReference type="ChEBI" id="CHEBI:29105"/>
    </ligand>
</feature>
<feature type="binding site" evidence="1">
    <location>
        <position position="239"/>
    </location>
    <ligand>
        <name>Zn(2+)</name>
        <dbReference type="ChEBI" id="CHEBI:29105"/>
    </ligand>
</feature>
<feature type="binding site" evidence="1">
    <location>
        <position position="243"/>
    </location>
    <ligand>
        <name>Zn(2+)</name>
        <dbReference type="ChEBI" id="CHEBI:29105"/>
    </ligand>
</feature>
<feature type="binding site" evidence="1">
    <location>
        <position position="276"/>
    </location>
    <ligand>
        <name>ATP</name>
        <dbReference type="ChEBI" id="CHEBI:30616"/>
    </ligand>
</feature>
<accession>Q045X8</accession>
<organism>
    <name type="scientific">Lactobacillus gasseri (strain ATCC 33323 / DSM 20243 / BCRC 14619 / CIP 102991 / JCM 1131 / KCTC 3163 / NCIMB 11718 / NCTC 13722 / AM63)</name>
    <dbReference type="NCBI Taxonomy" id="324831"/>
    <lineage>
        <taxon>Bacteria</taxon>
        <taxon>Bacillati</taxon>
        <taxon>Bacillota</taxon>
        <taxon>Bacilli</taxon>
        <taxon>Lactobacillales</taxon>
        <taxon>Lactobacillaceae</taxon>
        <taxon>Lactobacillus</taxon>
    </lineage>
</organism>
<sequence length="472" mass="54819">MIMKVFNTLTRQKEEFKPLVAGKVSMYVCGPTVYNYIHIGNARSVIAFDTIRRYFEYRGYDVKYVSNFTDVDDKMINEARKEHTTVGELADRYIKAFMEDTEALNIEPATLHPRATHEIQEIIDFVQDLIDKGFAYEVDGDVYYRAKKFPNYGQLSDQNIAELEEGASEHINEEEQSKKEDPIDFALWKAQKDDDEIAWDSPWGKGRPGWHIECSVMSTKYLGDTIDIHGGGQDLEFPHHENEIAQSEAKTGKKFVNYWMHNGFVTVGKKQEKMSKSLHNFVTVHDILKQIDPQVLRFYMSSVQYRRPINYSEDGLKQAETVLKRYQNTLRNLDARLMDEQETLEDSILRDNLTQAKAEFIEAMDDDFNVQNALSIMYDLTSNLNTHLQKNQVDKPALKKAKKLLLAWLEIFGVSFNEKQTENDDEIEVMVAKRDEARKNKNWAESDRLRDELQAKGIVIEDTPQGTRWHRA</sequence>
<comment type="catalytic activity">
    <reaction evidence="1">
        <text>tRNA(Cys) + L-cysteine + ATP = L-cysteinyl-tRNA(Cys) + AMP + diphosphate</text>
        <dbReference type="Rhea" id="RHEA:17773"/>
        <dbReference type="Rhea" id="RHEA-COMP:9661"/>
        <dbReference type="Rhea" id="RHEA-COMP:9679"/>
        <dbReference type="ChEBI" id="CHEBI:30616"/>
        <dbReference type="ChEBI" id="CHEBI:33019"/>
        <dbReference type="ChEBI" id="CHEBI:35235"/>
        <dbReference type="ChEBI" id="CHEBI:78442"/>
        <dbReference type="ChEBI" id="CHEBI:78517"/>
        <dbReference type="ChEBI" id="CHEBI:456215"/>
        <dbReference type="EC" id="6.1.1.16"/>
    </reaction>
</comment>
<comment type="cofactor">
    <cofactor evidence="1">
        <name>Zn(2+)</name>
        <dbReference type="ChEBI" id="CHEBI:29105"/>
    </cofactor>
    <text evidence="1">Binds 1 zinc ion per subunit.</text>
</comment>
<comment type="subunit">
    <text evidence="1">Monomer.</text>
</comment>
<comment type="subcellular location">
    <subcellularLocation>
        <location evidence="1">Cytoplasm</location>
    </subcellularLocation>
</comment>
<comment type="similarity">
    <text evidence="1">Belongs to the class-I aminoacyl-tRNA synthetase family.</text>
</comment>
<evidence type="ECO:0000255" key="1">
    <source>
        <dbReference type="HAMAP-Rule" id="MF_00041"/>
    </source>
</evidence>
<proteinExistence type="inferred from homology"/>
<protein>
    <recommendedName>
        <fullName evidence="1">Cysteine--tRNA ligase</fullName>
        <ecNumber evidence="1">6.1.1.16</ecNumber>
    </recommendedName>
    <alternativeName>
        <fullName evidence="1">Cysteinyl-tRNA synthetase</fullName>
        <shortName evidence="1">CysRS</shortName>
    </alternativeName>
</protein>
<gene>
    <name evidence="1" type="primary">cysS</name>
    <name type="ordered locus">LGAS_0338</name>
</gene>
<keyword id="KW-0030">Aminoacyl-tRNA synthetase</keyword>
<keyword id="KW-0067">ATP-binding</keyword>
<keyword id="KW-0963">Cytoplasm</keyword>
<keyword id="KW-0436">Ligase</keyword>
<keyword id="KW-0479">Metal-binding</keyword>
<keyword id="KW-0547">Nucleotide-binding</keyword>
<keyword id="KW-0648">Protein biosynthesis</keyword>
<keyword id="KW-0862">Zinc</keyword>